<gene>
    <name type="primary">tar</name>
    <name type="synonym">cheM</name>
    <name type="ordered locus">b1886</name>
    <name type="ordered locus">JW1875</name>
</gene>
<comment type="function">
    <text>Receptor for the attractant L-aspartate and related amino and dicarboxylic acids. Tar also mediates taxis to the attractant maltose via an interaction with the periplasmic maltose binding protein. Tar mediates taxis away from the repellents cobalt and nickel.</text>
</comment>
<comment type="function">
    <text>Chemotactic-signal transducers respond to changes in the concentration of attractants and repellents in the environment, transduce a signal from the outside to the inside of the cell, and facilitate sensory adaptation through the variation of the level of methylation. Attractants increase the level of methylation while repellents decrease the level of methylation, the methyl groups are added by the methyltransferase CheR and removed by the methylesterase CheB.</text>
</comment>
<comment type="interaction">
    <interactant intactId="EBI-1125130">
        <id>P07017</id>
    </interactant>
    <interactant intactId="EBI-1026773">
        <id>P07363</id>
        <label>cheA</label>
    </interactant>
    <organismsDiffer>false</organismsDiffer>
    <experiments>4</experiments>
</comment>
<comment type="interaction">
    <interactant intactId="EBI-1125130">
        <id>P07017</id>
    </interactant>
    <interactant intactId="EBI-1125947">
        <id>P0A964</id>
        <label>cheW</label>
    </interactant>
    <organismsDiffer>false</organismsDiffer>
    <experiments>5</experiments>
</comment>
<comment type="subcellular location">
    <subcellularLocation>
        <location evidence="6">Cell inner membrane</location>
        <topology evidence="6">Multi-pass membrane protein</topology>
    </subcellularLocation>
    <text>Found predominantly at cell poles.</text>
</comment>
<comment type="similarity">
    <text evidence="7">Belongs to the methyl-accepting chemotaxis (MCP) protein family.</text>
</comment>
<reference key="1">
    <citation type="journal article" date="1983" name="Cell">
        <title>Sensory transducers of E. coli are composed of discrete structural and functional domains.</title>
        <authorList>
            <person name="Krikos A."/>
            <person name="Mutoh N."/>
            <person name="Boyd A."/>
            <person name="Simon M.I."/>
        </authorList>
    </citation>
    <scope>NUCLEOTIDE SEQUENCE [GENOMIC DNA]</scope>
</reference>
<reference key="2">
    <citation type="journal article" date="1996" name="DNA Res.">
        <title>A 460-kb DNA sequence of the Escherichia coli K-12 genome corresponding to the 40.1-50.0 min region on the linkage map.</title>
        <authorList>
            <person name="Itoh T."/>
            <person name="Aiba H."/>
            <person name="Baba T."/>
            <person name="Fujita K."/>
            <person name="Hayashi K."/>
            <person name="Inada T."/>
            <person name="Isono K."/>
            <person name="Kasai H."/>
            <person name="Kimura S."/>
            <person name="Kitakawa M."/>
            <person name="Kitagawa M."/>
            <person name="Makino K."/>
            <person name="Miki T."/>
            <person name="Mizobuchi K."/>
            <person name="Mori H."/>
            <person name="Mori T."/>
            <person name="Motomura K."/>
            <person name="Nakade S."/>
            <person name="Nakamura Y."/>
            <person name="Nashimoto H."/>
            <person name="Nishio Y."/>
            <person name="Oshima T."/>
            <person name="Saito N."/>
            <person name="Sampei G."/>
            <person name="Seki Y."/>
            <person name="Sivasundaram S."/>
            <person name="Tagami H."/>
            <person name="Takeda J."/>
            <person name="Takemoto K."/>
            <person name="Wada C."/>
            <person name="Yamamoto Y."/>
            <person name="Horiuchi T."/>
        </authorList>
    </citation>
    <scope>NUCLEOTIDE SEQUENCE [LARGE SCALE GENOMIC DNA]</scope>
    <source>
        <strain>K12 / W3110 / ATCC 27325 / DSM 5911</strain>
    </source>
</reference>
<reference key="3">
    <citation type="journal article" date="1997" name="Science">
        <title>The complete genome sequence of Escherichia coli K-12.</title>
        <authorList>
            <person name="Blattner F.R."/>
            <person name="Plunkett G. III"/>
            <person name="Bloch C.A."/>
            <person name="Perna N.T."/>
            <person name="Burland V."/>
            <person name="Riley M."/>
            <person name="Collado-Vides J."/>
            <person name="Glasner J.D."/>
            <person name="Rode C.K."/>
            <person name="Mayhew G.F."/>
            <person name="Gregor J."/>
            <person name="Davis N.W."/>
            <person name="Kirkpatrick H.A."/>
            <person name="Goeden M.A."/>
            <person name="Rose D.J."/>
            <person name="Mau B."/>
            <person name="Shao Y."/>
        </authorList>
    </citation>
    <scope>NUCLEOTIDE SEQUENCE [LARGE SCALE GENOMIC DNA]</scope>
    <source>
        <strain>K12 / MG1655 / ATCC 47076</strain>
    </source>
</reference>
<reference key="4">
    <citation type="journal article" date="2006" name="Mol. Syst. Biol.">
        <title>Highly accurate genome sequences of Escherichia coli K-12 strains MG1655 and W3110.</title>
        <authorList>
            <person name="Hayashi K."/>
            <person name="Morooka N."/>
            <person name="Yamamoto Y."/>
            <person name="Fujita K."/>
            <person name="Isono K."/>
            <person name="Choi S."/>
            <person name="Ohtsubo E."/>
            <person name="Baba T."/>
            <person name="Wanner B.L."/>
            <person name="Mori H."/>
            <person name="Horiuchi T."/>
        </authorList>
    </citation>
    <scope>NUCLEOTIDE SEQUENCE [LARGE SCALE GENOMIC DNA]</scope>
    <source>
        <strain>K12 / W3110 / ATCC 27325 / DSM 5911</strain>
    </source>
</reference>
<reference key="5">
    <citation type="journal article" date="1997" name="Electrophoresis">
        <title>Escherichia coli proteome analysis using the gene-protein database.</title>
        <authorList>
            <person name="VanBogelen R.A."/>
            <person name="Abshire K.Z."/>
            <person name="Moldover B."/>
            <person name="Olson E.R."/>
            <person name="Neidhardt F.C."/>
        </authorList>
    </citation>
    <scope>IDENTIFICATION BY 2D-GEL</scope>
</reference>
<reference key="6">
    <citation type="journal article" date="2005" name="Science">
        <title>Global topology analysis of the Escherichia coli inner membrane proteome.</title>
        <authorList>
            <person name="Daley D.O."/>
            <person name="Rapp M."/>
            <person name="Granseth E."/>
            <person name="Melen K."/>
            <person name="Drew D."/>
            <person name="von Heijne G."/>
        </authorList>
    </citation>
    <scope>TOPOLOGY [LARGE SCALE ANALYSIS]</scope>
    <source>
        <strain>K12 / MG1655 / ATCC 47076</strain>
    </source>
</reference>
<reference key="7">
    <citation type="journal article" date="2012" name="Mol. Microbiol.">
        <title>Isolation and identification of new inner membrane-associated proteins that localize to cell poles in Escherichia coli.</title>
        <authorList>
            <person name="Li G."/>
            <person name="Young K.D."/>
        </authorList>
    </citation>
    <scope>SUBCELLULAR LOCATION</scope>
    <scope>TOPOLOGY</scope>
    <source>
        <strain>K12 / MG1655 / ATCC 47076</strain>
    </source>
</reference>
<reference key="8">
    <citation type="journal article" date="1995" name="Acta Crystallogr. D">
        <title>The three-dimensional structure of the aspartate receptor from Escherichia coli.</title>
        <authorList>
            <person name="Bowie J.U."/>
            <person name="Pakula A.A."/>
            <person name="Simon M.I."/>
        </authorList>
    </citation>
    <scope>X-RAY CRYSTALLOGRAPHY (2.3 ANGSTROMS) OF 38-179</scope>
</reference>
<reference key="9">
    <citation type="journal article" date="1997" name="FEBS Lett.">
        <title>Apo structure of the ligand-binding domain of aspartate receptor from Escherichia coli and its comparison with ligand-bound or pseudoligand-bound structures.</title>
        <authorList>
            <person name="Chi Y.-I."/>
            <person name="Yokota H."/>
            <person name="Kim S.-H."/>
        </authorList>
    </citation>
    <scope>X-RAY CRYSTALLOGRAPHY (2.3 ANGSTROMS) OF 38-180</scope>
</reference>
<protein>
    <recommendedName>
        <fullName>Methyl-accepting chemotaxis protein II</fullName>
        <shortName>MCP-II</shortName>
    </recommendedName>
    <alternativeName>
        <fullName>Aspartate chemoreceptor protein</fullName>
    </alternativeName>
</protein>
<keyword id="KW-0002">3D-structure</keyword>
<keyword id="KW-0997">Cell inner membrane</keyword>
<keyword id="KW-1003">Cell membrane</keyword>
<keyword id="KW-0145">Chemotaxis</keyword>
<keyword id="KW-0472">Membrane</keyword>
<keyword id="KW-0488">Methylation</keyword>
<keyword id="KW-1185">Reference proteome</keyword>
<keyword id="KW-0807">Transducer</keyword>
<keyword id="KW-0812">Transmembrane</keyword>
<keyword id="KW-1133">Transmembrane helix</keyword>
<dbReference type="EMBL" id="AH000879">
    <property type="protein sequence ID" value="AAA23566.1"/>
    <property type="molecule type" value="Genomic_DNA"/>
</dbReference>
<dbReference type="EMBL" id="U00096">
    <property type="protein sequence ID" value="AAC74956.1"/>
    <property type="molecule type" value="Genomic_DNA"/>
</dbReference>
<dbReference type="EMBL" id="AP009048">
    <property type="protein sequence ID" value="BAA15702.1"/>
    <property type="molecule type" value="Genomic_DNA"/>
</dbReference>
<dbReference type="PIR" id="F64951">
    <property type="entry name" value="QRECM4"/>
</dbReference>
<dbReference type="RefSeq" id="NP_416400.1">
    <property type="nucleotide sequence ID" value="NC_000913.3"/>
</dbReference>
<dbReference type="RefSeq" id="WP_001297437.1">
    <property type="nucleotide sequence ID" value="NZ_SSZK01000001.1"/>
</dbReference>
<dbReference type="PDB" id="2ASR">
    <property type="method" value="X-ray"/>
    <property type="resolution" value="2.30 A"/>
    <property type="chains" value="A=38-179"/>
</dbReference>
<dbReference type="PDB" id="2L9G">
    <property type="method" value="NMR"/>
    <property type="chains" value="A=214-232"/>
</dbReference>
<dbReference type="PDB" id="4Z9H">
    <property type="method" value="X-ray"/>
    <property type="resolution" value="1.45 A"/>
    <property type="chains" value="A/B=26-193"/>
</dbReference>
<dbReference type="PDB" id="4Z9I">
    <property type="method" value="X-ray"/>
    <property type="resolution" value="1.57 A"/>
    <property type="chains" value="A/B=26-193"/>
</dbReference>
<dbReference type="PDB" id="4Z9J">
    <property type="method" value="X-ray"/>
    <property type="resolution" value="1.78 A"/>
    <property type="chains" value="A/B=26-193"/>
</dbReference>
<dbReference type="PDBsum" id="2ASR"/>
<dbReference type="PDBsum" id="2L9G"/>
<dbReference type="PDBsum" id="4Z9H"/>
<dbReference type="PDBsum" id="4Z9I"/>
<dbReference type="PDBsum" id="4Z9J"/>
<dbReference type="BMRB" id="P07017"/>
<dbReference type="EMDB" id="EMD-3234"/>
<dbReference type="EMDB" id="EMD-6319"/>
<dbReference type="EMDB" id="EMD-6320"/>
<dbReference type="SMR" id="P07017"/>
<dbReference type="BioGRID" id="4260381">
    <property type="interactions" value="321"/>
</dbReference>
<dbReference type="DIP" id="DIP-10956N"/>
<dbReference type="FunCoup" id="P07017">
    <property type="interactions" value="242"/>
</dbReference>
<dbReference type="IntAct" id="P07017">
    <property type="interactions" value="7"/>
</dbReference>
<dbReference type="STRING" id="511145.b1886"/>
<dbReference type="MoonProt" id="P07017"/>
<dbReference type="PaxDb" id="511145-b1886"/>
<dbReference type="EnsemblBacteria" id="AAC74956">
    <property type="protein sequence ID" value="AAC74956"/>
    <property type="gene ID" value="b1886"/>
</dbReference>
<dbReference type="GeneID" id="946399"/>
<dbReference type="KEGG" id="ecj:JW1875"/>
<dbReference type="KEGG" id="eco:b1886"/>
<dbReference type="KEGG" id="ecoc:C3026_10725"/>
<dbReference type="PATRIC" id="fig|511145.12.peg.1967"/>
<dbReference type="EchoBASE" id="EB0981"/>
<dbReference type="eggNOG" id="COG0840">
    <property type="taxonomic scope" value="Bacteria"/>
</dbReference>
<dbReference type="HOGENOM" id="CLU_000445_107_16_6"/>
<dbReference type="InParanoid" id="P07017"/>
<dbReference type="OMA" id="AVSEMDH"/>
<dbReference type="OrthoDB" id="9765776at2"/>
<dbReference type="PhylomeDB" id="P07017"/>
<dbReference type="BioCyc" id="EcoCyc:TAR-MONOMER"/>
<dbReference type="EvolutionaryTrace" id="P07017"/>
<dbReference type="PRO" id="PR:P07017"/>
<dbReference type="Proteomes" id="UP000000625">
    <property type="component" value="Chromosome"/>
</dbReference>
<dbReference type="GO" id="GO:0051286">
    <property type="term" value="C:cell tip"/>
    <property type="evidence" value="ECO:0000314"/>
    <property type="project" value="CACAO"/>
</dbReference>
<dbReference type="GO" id="GO:0098561">
    <property type="term" value="C:methyl accepting chemotaxis protein complex"/>
    <property type="evidence" value="ECO:0000314"/>
    <property type="project" value="UniProtKB"/>
</dbReference>
<dbReference type="GO" id="GO:0005886">
    <property type="term" value="C:plasma membrane"/>
    <property type="evidence" value="ECO:0000314"/>
    <property type="project" value="UniProtKB"/>
</dbReference>
<dbReference type="GO" id="GO:0042802">
    <property type="term" value="F:identical protein binding"/>
    <property type="evidence" value="ECO:0000353"/>
    <property type="project" value="UniProtKB"/>
</dbReference>
<dbReference type="GO" id="GO:0043424">
    <property type="term" value="F:protein histidine kinase binding"/>
    <property type="evidence" value="ECO:0000314"/>
    <property type="project" value="EcoCyc"/>
</dbReference>
<dbReference type="GO" id="GO:0042803">
    <property type="term" value="F:protein homodimerization activity"/>
    <property type="evidence" value="ECO:0000314"/>
    <property type="project" value="EcoCyc"/>
</dbReference>
<dbReference type="GO" id="GO:0004888">
    <property type="term" value="F:transmembrane signaling receptor activity"/>
    <property type="evidence" value="ECO:0000315"/>
    <property type="project" value="EcoCyc"/>
</dbReference>
<dbReference type="GO" id="GO:0071230">
    <property type="term" value="P:cellular response to amino acid stimulus"/>
    <property type="evidence" value="ECO:0000315"/>
    <property type="project" value="UniProtKB"/>
</dbReference>
<dbReference type="GO" id="GO:0006935">
    <property type="term" value="P:chemotaxis"/>
    <property type="evidence" value="ECO:0000315"/>
    <property type="project" value="EcoCyc"/>
</dbReference>
<dbReference type="GO" id="GO:0009593">
    <property type="term" value="P:detection of chemical stimulus"/>
    <property type="evidence" value="ECO:0000314"/>
    <property type="project" value="UniProtKB"/>
</dbReference>
<dbReference type="GO" id="GO:1901875">
    <property type="term" value="P:positive regulation of post-translational protein modification"/>
    <property type="evidence" value="ECO:0000315"/>
    <property type="project" value="CAFA"/>
</dbReference>
<dbReference type="GO" id="GO:0051260">
    <property type="term" value="P:protein homooligomerization"/>
    <property type="evidence" value="ECO:0000315"/>
    <property type="project" value="UniProtKB"/>
</dbReference>
<dbReference type="GO" id="GO:0050920">
    <property type="term" value="P:regulation of chemotaxis"/>
    <property type="evidence" value="ECO:0000314"/>
    <property type="project" value="UniProtKB"/>
</dbReference>
<dbReference type="GO" id="GO:0007172">
    <property type="term" value="P:signal complex assembly"/>
    <property type="evidence" value="ECO:0000314"/>
    <property type="project" value="UniProtKB"/>
</dbReference>
<dbReference type="GO" id="GO:0007165">
    <property type="term" value="P:signal transduction"/>
    <property type="evidence" value="ECO:0007669"/>
    <property type="project" value="UniProtKB-KW"/>
</dbReference>
<dbReference type="CDD" id="cd06225">
    <property type="entry name" value="HAMP"/>
    <property type="match status" value="1"/>
</dbReference>
<dbReference type="CDD" id="cd11386">
    <property type="entry name" value="MCP_signal"/>
    <property type="match status" value="1"/>
</dbReference>
<dbReference type="CDD" id="cd19407">
    <property type="entry name" value="Tar_Tsr_sensor"/>
    <property type="match status" value="1"/>
</dbReference>
<dbReference type="FunFam" id="1.20.120.30:FF:000001">
    <property type="entry name" value="Methyl-accepting chemotaxis protein II"/>
    <property type="match status" value="1"/>
</dbReference>
<dbReference type="FunFam" id="1.10.287.950:FF:000001">
    <property type="entry name" value="Methyl-accepting chemotaxis sensory transducer"/>
    <property type="match status" value="1"/>
</dbReference>
<dbReference type="Gene3D" id="1.20.120.30">
    <property type="entry name" value="Aspartate receptor, ligand-binding domain"/>
    <property type="match status" value="1"/>
</dbReference>
<dbReference type="Gene3D" id="1.10.287.950">
    <property type="entry name" value="Methyl-accepting chemotaxis protein"/>
    <property type="match status" value="1"/>
</dbReference>
<dbReference type="InterPro" id="IPR035440">
    <property type="entry name" value="4HB_MCP_dom_sf"/>
</dbReference>
<dbReference type="InterPro" id="IPR004090">
    <property type="entry name" value="Chemotax_Me-accpt_rcpt"/>
</dbReference>
<dbReference type="InterPro" id="IPR004091">
    <property type="entry name" value="Chemotax_Me-accpt_rcpt_Me-site"/>
</dbReference>
<dbReference type="InterPro" id="IPR003660">
    <property type="entry name" value="HAMP_dom"/>
</dbReference>
<dbReference type="InterPro" id="IPR051310">
    <property type="entry name" value="MCP_chemotaxis"/>
</dbReference>
<dbReference type="InterPro" id="IPR004089">
    <property type="entry name" value="MCPsignal_dom"/>
</dbReference>
<dbReference type="InterPro" id="IPR003122">
    <property type="entry name" value="Tar_rcpt_lig-bd"/>
</dbReference>
<dbReference type="NCBIfam" id="NF011622">
    <property type="entry name" value="PRK15048.1"/>
    <property type="match status" value="1"/>
</dbReference>
<dbReference type="PANTHER" id="PTHR43531:SF16">
    <property type="entry name" value="METHYL-ACCEPTING CHEMOTAXIS PROTEIN II"/>
    <property type="match status" value="1"/>
</dbReference>
<dbReference type="PANTHER" id="PTHR43531">
    <property type="entry name" value="PROTEIN ICFG"/>
    <property type="match status" value="1"/>
</dbReference>
<dbReference type="Pfam" id="PF00672">
    <property type="entry name" value="HAMP"/>
    <property type="match status" value="1"/>
</dbReference>
<dbReference type="Pfam" id="PF00015">
    <property type="entry name" value="MCPsignal"/>
    <property type="match status" value="1"/>
</dbReference>
<dbReference type="Pfam" id="PF02203">
    <property type="entry name" value="TarH"/>
    <property type="match status" value="1"/>
</dbReference>
<dbReference type="PRINTS" id="PR00260">
    <property type="entry name" value="CHEMTRNSDUCR"/>
</dbReference>
<dbReference type="SMART" id="SM00304">
    <property type="entry name" value="HAMP"/>
    <property type="match status" value="1"/>
</dbReference>
<dbReference type="SMART" id="SM00283">
    <property type="entry name" value="MA"/>
    <property type="match status" value="1"/>
</dbReference>
<dbReference type="SMART" id="SM00319">
    <property type="entry name" value="TarH"/>
    <property type="match status" value="1"/>
</dbReference>
<dbReference type="SUPFAM" id="SSF47170">
    <property type="entry name" value="Aspartate receptor, ligand-binding domain"/>
    <property type="match status" value="1"/>
</dbReference>
<dbReference type="SUPFAM" id="SSF58104">
    <property type="entry name" value="Methyl-accepting chemotaxis protein (MCP) signaling domain"/>
    <property type="match status" value="1"/>
</dbReference>
<dbReference type="PROSITE" id="PS00538">
    <property type="entry name" value="CHEMOTAXIS_TRANSDUC_1"/>
    <property type="match status" value="1"/>
</dbReference>
<dbReference type="PROSITE" id="PS50111">
    <property type="entry name" value="CHEMOTAXIS_TRANSDUC_2"/>
    <property type="match status" value="1"/>
</dbReference>
<dbReference type="PROSITE" id="PS50885">
    <property type="entry name" value="HAMP"/>
    <property type="match status" value="1"/>
</dbReference>
<accession>P07017</accession>
<accession>P76301</accession>
<feature type="chain" id="PRO_0000110538" description="Methyl-accepting chemotaxis protein II">
    <location>
        <begin position="1"/>
        <end position="553"/>
    </location>
</feature>
<feature type="topological domain" description="Cytoplasmic">
    <location>
        <begin position="1"/>
        <end position="6"/>
    </location>
</feature>
<feature type="transmembrane region" description="Helical" evidence="2">
    <location>
        <begin position="7"/>
        <end position="33"/>
    </location>
</feature>
<feature type="topological domain" description="Periplasmic">
    <location>
        <begin position="34"/>
        <end position="190"/>
    </location>
</feature>
<feature type="transmembrane region" description="Helical" evidence="2">
    <location>
        <begin position="191"/>
        <end position="211"/>
    </location>
</feature>
<feature type="topological domain" description="Cytoplasmic">
    <location>
        <begin position="212"/>
        <end position="553"/>
    </location>
</feature>
<feature type="domain" description="HAMP" evidence="3">
    <location>
        <begin position="214"/>
        <end position="266"/>
    </location>
</feature>
<feature type="domain" description="Methyl-accepting transducer" evidence="4">
    <location>
        <begin position="271"/>
        <end position="500"/>
    </location>
</feature>
<feature type="region of interest" description="The 3 Arg may form a positively charged pocket, which binds the alpha-carboxyl group of the attractant AA">
    <location>
        <begin position="64"/>
        <end position="73"/>
    </location>
</feature>
<feature type="region of interest" description="Disordered" evidence="5">
    <location>
        <begin position="517"/>
        <end position="553"/>
    </location>
</feature>
<feature type="compositionally biased region" description="Polar residues" evidence="5">
    <location>
        <begin position="519"/>
        <end position="531"/>
    </location>
</feature>
<feature type="modified residue" description="Glutamate methyl ester (Gln)" evidence="1">
    <location>
        <position position="295"/>
    </location>
</feature>
<feature type="modified residue" description="Glutamate methyl ester (Glu)" evidence="1">
    <location>
        <position position="302"/>
    </location>
</feature>
<feature type="modified residue" description="Glutamate methyl ester (Gln)" evidence="1">
    <location>
        <position position="309"/>
    </location>
</feature>
<feature type="modified residue" description="Glutamate methyl ester (Glu)" evidence="1">
    <location>
        <position position="491"/>
    </location>
</feature>
<feature type="modified residue" description="Glutamate methyl ester (Glu)" evidence="1">
    <location>
        <position position="500"/>
    </location>
</feature>
<feature type="sequence conflict" description="In Ref. 1; AAA23566." evidence="7" ref="1">
    <original>A</original>
    <variation>R</variation>
    <location>
        <position position="164"/>
    </location>
</feature>
<feature type="helix" evidence="9">
    <location>
        <begin position="37"/>
        <end position="74"/>
    </location>
</feature>
<feature type="helix" evidence="9">
    <location>
        <begin position="81"/>
        <end position="85"/>
    </location>
</feature>
<feature type="helix" evidence="9">
    <location>
        <begin position="86"/>
        <end position="109"/>
    </location>
</feature>
<feature type="helix" evidence="9">
    <location>
        <begin position="114"/>
        <end position="116"/>
    </location>
</feature>
<feature type="helix" evidence="9">
    <location>
        <begin position="117"/>
        <end position="142"/>
    </location>
</feature>
<feature type="helix" evidence="9">
    <location>
        <begin position="146"/>
        <end position="151"/>
    </location>
</feature>
<feature type="helix" evidence="9">
    <location>
        <begin position="154"/>
        <end position="182"/>
    </location>
</feature>
<feature type="turn" evidence="8">
    <location>
        <begin position="215"/>
        <end position="219"/>
    </location>
</feature>
<feature type="helix" evidence="8">
    <location>
        <begin position="220"/>
        <end position="226"/>
    </location>
</feature>
<feature type="turn" evidence="8">
    <location>
        <begin position="227"/>
        <end position="230"/>
    </location>
</feature>
<proteinExistence type="evidence at protein level"/>
<organism>
    <name type="scientific">Escherichia coli (strain K12)</name>
    <dbReference type="NCBI Taxonomy" id="83333"/>
    <lineage>
        <taxon>Bacteria</taxon>
        <taxon>Pseudomonadati</taxon>
        <taxon>Pseudomonadota</taxon>
        <taxon>Gammaproteobacteria</taxon>
        <taxon>Enterobacterales</taxon>
        <taxon>Enterobacteriaceae</taxon>
        <taxon>Escherichia</taxon>
    </lineage>
</organism>
<sequence length="553" mass="59944">MINRIRVVTLLVMVLGVFALLQLISGSLFFSSLHHSQKSFVVSNQLREQQGELTSTWDLMLQTRINLSRSAVRMMMDSSNQQSNAKVELLDSARKTLAQAATHYKKFKSMAPLPEMVATSRNIDEKYKNYYTALTELIDYLDYGNTGAYFAQPTQGMQNAMGEAFAQYALSSEKLYRDIVTDNADDYRFAQWQLAVIALVVVLILLVAWYGIRRMLLTPLAKIIAHIREIAGGNLANTLTIDGRSEMGDLAQSVSHMQRSLTDTVTHVREGSDAIYAGTREIAAGNTDLSSRTEQQASALEETAASMEQLTATVKQNADNARQASQLAQSASDTAQHGGKVVDGVVKTMHEIADSSKKIADIISVIDGIAFQTNILALNAAVEAARAGEQGRGFAVVAGEVRNLASRSAQAAKEIKALIEDSVSRVDTGSVLVESAGETMNNIVNAVTRVTDIMGEIASASDEQSRGIDQVALAVSEMDRVTQQNASLVQESAAAAAALEEQASRLTQAVSAFRLAASPLTNKPQTPSRPASEQPPAQPRLRIAEQDPNWETF</sequence>
<evidence type="ECO:0000250" key="1">
    <source>
        <dbReference type="UniProtKB" id="P02942"/>
    </source>
</evidence>
<evidence type="ECO:0000255" key="2"/>
<evidence type="ECO:0000255" key="3">
    <source>
        <dbReference type="PROSITE-ProRule" id="PRU00102"/>
    </source>
</evidence>
<evidence type="ECO:0000255" key="4">
    <source>
        <dbReference type="PROSITE-ProRule" id="PRU00284"/>
    </source>
</evidence>
<evidence type="ECO:0000256" key="5">
    <source>
        <dbReference type="SAM" id="MobiDB-lite"/>
    </source>
</evidence>
<evidence type="ECO:0000269" key="6">
    <source>
    </source>
</evidence>
<evidence type="ECO:0000305" key="7"/>
<evidence type="ECO:0007829" key="8">
    <source>
        <dbReference type="PDB" id="2L9G"/>
    </source>
</evidence>
<evidence type="ECO:0007829" key="9">
    <source>
        <dbReference type="PDB" id="4Z9H"/>
    </source>
</evidence>
<name>MCP2_ECOLI</name>